<keyword id="KW-0687">Ribonucleoprotein</keyword>
<keyword id="KW-0689">Ribosomal protein</keyword>
<keyword id="KW-0694">RNA-binding</keyword>
<keyword id="KW-0699">rRNA-binding</keyword>
<sequence>MVQKRIDPKELNLKERVVNINRVAKVVKGGKRLKFSAIVVVGDENGHVGAGHGKAAEIPDAIRKAIEDAKKHLIEVPIVGTTIPHEAIGDFGASKVLIKPAPEGTGVIAGGAVRAVCELAGIKDIRTKSLGSNNPANVVHATIEALKQLKKPEEVARLRGKTLEEIIK</sequence>
<accession>A4XLR3</accession>
<dbReference type="EMBL" id="CP000679">
    <property type="protein sequence ID" value="ABP67848.1"/>
    <property type="molecule type" value="Genomic_DNA"/>
</dbReference>
<dbReference type="RefSeq" id="WP_011917774.1">
    <property type="nucleotide sequence ID" value="NC_009437.1"/>
</dbReference>
<dbReference type="SMR" id="A4XLR3"/>
<dbReference type="STRING" id="351627.Csac_2270"/>
<dbReference type="KEGG" id="csc:Csac_2270"/>
<dbReference type="eggNOG" id="COG0098">
    <property type="taxonomic scope" value="Bacteria"/>
</dbReference>
<dbReference type="HOGENOM" id="CLU_065898_2_2_9"/>
<dbReference type="OrthoDB" id="9809045at2"/>
<dbReference type="Proteomes" id="UP000000256">
    <property type="component" value="Chromosome"/>
</dbReference>
<dbReference type="GO" id="GO:0015935">
    <property type="term" value="C:small ribosomal subunit"/>
    <property type="evidence" value="ECO:0007669"/>
    <property type="project" value="InterPro"/>
</dbReference>
<dbReference type="GO" id="GO:0019843">
    <property type="term" value="F:rRNA binding"/>
    <property type="evidence" value="ECO:0007669"/>
    <property type="project" value="UniProtKB-UniRule"/>
</dbReference>
<dbReference type="GO" id="GO:0003735">
    <property type="term" value="F:structural constituent of ribosome"/>
    <property type="evidence" value="ECO:0007669"/>
    <property type="project" value="InterPro"/>
</dbReference>
<dbReference type="GO" id="GO:0006412">
    <property type="term" value="P:translation"/>
    <property type="evidence" value="ECO:0007669"/>
    <property type="project" value="UniProtKB-UniRule"/>
</dbReference>
<dbReference type="FunFam" id="3.30.160.20:FF:000001">
    <property type="entry name" value="30S ribosomal protein S5"/>
    <property type="match status" value="1"/>
</dbReference>
<dbReference type="FunFam" id="3.30.230.10:FF:000002">
    <property type="entry name" value="30S ribosomal protein S5"/>
    <property type="match status" value="1"/>
</dbReference>
<dbReference type="Gene3D" id="3.30.160.20">
    <property type="match status" value="1"/>
</dbReference>
<dbReference type="Gene3D" id="3.30.230.10">
    <property type="match status" value="1"/>
</dbReference>
<dbReference type="HAMAP" id="MF_01307_B">
    <property type="entry name" value="Ribosomal_uS5_B"/>
    <property type="match status" value="1"/>
</dbReference>
<dbReference type="InterPro" id="IPR020568">
    <property type="entry name" value="Ribosomal_Su5_D2-typ_SF"/>
</dbReference>
<dbReference type="InterPro" id="IPR000851">
    <property type="entry name" value="Ribosomal_uS5"/>
</dbReference>
<dbReference type="InterPro" id="IPR005712">
    <property type="entry name" value="Ribosomal_uS5_bac-type"/>
</dbReference>
<dbReference type="InterPro" id="IPR005324">
    <property type="entry name" value="Ribosomal_uS5_C"/>
</dbReference>
<dbReference type="InterPro" id="IPR013810">
    <property type="entry name" value="Ribosomal_uS5_N"/>
</dbReference>
<dbReference type="InterPro" id="IPR018192">
    <property type="entry name" value="Ribosomal_uS5_N_CS"/>
</dbReference>
<dbReference type="InterPro" id="IPR014721">
    <property type="entry name" value="Ribsml_uS5_D2-typ_fold_subgr"/>
</dbReference>
<dbReference type="NCBIfam" id="TIGR01021">
    <property type="entry name" value="rpsE_bact"/>
    <property type="match status" value="1"/>
</dbReference>
<dbReference type="PANTHER" id="PTHR48277">
    <property type="entry name" value="MITOCHONDRIAL RIBOSOMAL PROTEIN S5"/>
    <property type="match status" value="1"/>
</dbReference>
<dbReference type="PANTHER" id="PTHR48277:SF1">
    <property type="entry name" value="MITOCHONDRIAL RIBOSOMAL PROTEIN S5"/>
    <property type="match status" value="1"/>
</dbReference>
<dbReference type="Pfam" id="PF00333">
    <property type="entry name" value="Ribosomal_S5"/>
    <property type="match status" value="1"/>
</dbReference>
<dbReference type="Pfam" id="PF03719">
    <property type="entry name" value="Ribosomal_S5_C"/>
    <property type="match status" value="1"/>
</dbReference>
<dbReference type="SUPFAM" id="SSF54768">
    <property type="entry name" value="dsRNA-binding domain-like"/>
    <property type="match status" value="1"/>
</dbReference>
<dbReference type="SUPFAM" id="SSF54211">
    <property type="entry name" value="Ribosomal protein S5 domain 2-like"/>
    <property type="match status" value="1"/>
</dbReference>
<dbReference type="PROSITE" id="PS00585">
    <property type="entry name" value="RIBOSOMAL_S5"/>
    <property type="match status" value="1"/>
</dbReference>
<dbReference type="PROSITE" id="PS50881">
    <property type="entry name" value="S5_DSRBD"/>
    <property type="match status" value="1"/>
</dbReference>
<protein>
    <recommendedName>
        <fullName evidence="1">Small ribosomal subunit protein uS5</fullName>
    </recommendedName>
    <alternativeName>
        <fullName evidence="2">30S ribosomal protein S5</fullName>
    </alternativeName>
</protein>
<comment type="function">
    <text evidence="1">With S4 and S12 plays an important role in translational accuracy.</text>
</comment>
<comment type="function">
    <text evidence="1">Located at the back of the 30S subunit body where it stabilizes the conformation of the head with respect to the body.</text>
</comment>
<comment type="subunit">
    <text evidence="1">Part of the 30S ribosomal subunit. Contacts proteins S4 and S8.</text>
</comment>
<comment type="domain">
    <text>The N-terminal domain interacts with the head of the 30S subunit; the C-terminal domain interacts with the body and contacts protein S4. The interaction surface between S4 and S5 is involved in control of translational fidelity.</text>
</comment>
<comment type="similarity">
    <text evidence="1">Belongs to the universal ribosomal protein uS5 family.</text>
</comment>
<gene>
    <name evidence="1" type="primary">rpsE</name>
    <name type="ordered locus">Csac_2270</name>
</gene>
<reference key="1">
    <citation type="submission" date="2007-04" db="EMBL/GenBank/DDBJ databases">
        <title>Genome sequence of the thermophilic hydrogen-producing bacterium Caldicellulosiruptor saccharolyticus DSM 8903.</title>
        <authorList>
            <person name="Copeland A."/>
            <person name="Lucas S."/>
            <person name="Lapidus A."/>
            <person name="Barry K."/>
            <person name="Detter J.C."/>
            <person name="Glavina del Rio T."/>
            <person name="Hammon N."/>
            <person name="Israni S."/>
            <person name="Dalin E."/>
            <person name="Tice H."/>
            <person name="Pitluck S."/>
            <person name="Kiss H."/>
            <person name="Brettin T."/>
            <person name="Bruce D."/>
            <person name="Han C."/>
            <person name="Schmutz J."/>
            <person name="Larimer F."/>
            <person name="Land M."/>
            <person name="Hauser L."/>
            <person name="Kyrpides N."/>
            <person name="Lykidis A."/>
            <person name="van de Werken H.J.G."/>
            <person name="Verhaart M.R.A."/>
            <person name="VanFossen A.L."/>
            <person name="Lewis D.L."/>
            <person name="Nichols J.D."/>
            <person name="Goorissen H.P."/>
            <person name="van Niel E.W.J."/>
            <person name="Stams F.J.M."/>
            <person name="Willquist K.U."/>
            <person name="Ward D.E."/>
            <person name="van der Oost J."/>
            <person name="Kelly R.M."/>
            <person name="Kengen S.M.W."/>
            <person name="Richardson P."/>
        </authorList>
    </citation>
    <scope>NUCLEOTIDE SEQUENCE [LARGE SCALE GENOMIC DNA]</scope>
    <source>
        <strain>ATCC 43494 / DSM 8903 / Tp8T 6331</strain>
    </source>
</reference>
<evidence type="ECO:0000255" key="1">
    <source>
        <dbReference type="HAMAP-Rule" id="MF_01307"/>
    </source>
</evidence>
<evidence type="ECO:0000305" key="2"/>
<organism>
    <name type="scientific">Caldicellulosiruptor saccharolyticus (strain ATCC 43494 / DSM 8903 / Tp8T 6331)</name>
    <dbReference type="NCBI Taxonomy" id="351627"/>
    <lineage>
        <taxon>Bacteria</taxon>
        <taxon>Bacillati</taxon>
        <taxon>Bacillota</taxon>
        <taxon>Bacillota incertae sedis</taxon>
        <taxon>Caldicellulosiruptorales</taxon>
        <taxon>Caldicellulosiruptoraceae</taxon>
        <taxon>Caldicellulosiruptor</taxon>
    </lineage>
</organism>
<feature type="chain" id="PRO_0000323095" description="Small ribosomal subunit protein uS5">
    <location>
        <begin position="1"/>
        <end position="168"/>
    </location>
</feature>
<feature type="domain" description="S5 DRBM" evidence="1">
    <location>
        <begin position="13"/>
        <end position="76"/>
    </location>
</feature>
<proteinExistence type="inferred from homology"/>
<name>RS5_CALS8</name>